<name>DER_PROM5</name>
<accession>A2BV51</accession>
<protein>
    <recommendedName>
        <fullName evidence="1">GTPase Der</fullName>
    </recommendedName>
    <alternativeName>
        <fullName evidence="1">GTP-binding protein EngA</fullName>
    </alternativeName>
</protein>
<proteinExistence type="inferred from homology"/>
<feature type="chain" id="PRO_1000011692" description="GTPase Der">
    <location>
        <begin position="1"/>
        <end position="458"/>
    </location>
</feature>
<feature type="domain" description="EngA-type G 1">
    <location>
        <begin position="4"/>
        <end position="169"/>
    </location>
</feature>
<feature type="domain" description="EngA-type G 2">
    <location>
        <begin position="178"/>
        <end position="353"/>
    </location>
</feature>
<feature type="domain" description="KH-like" evidence="1">
    <location>
        <begin position="354"/>
        <end position="439"/>
    </location>
</feature>
<feature type="binding site" evidence="1">
    <location>
        <begin position="10"/>
        <end position="17"/>
    </location>
    <ligand>
        <name>GTP</name>
        <dbReference type="ChEBI" id="CHEBI:37565"/>
        <label>1</label>
    </ligand>
</feature>
<feature type="binding site" evidence="1">
    <location>
        <begin position="57"/>
        <end position="61"/>
    </location>
    <ligand>
        <name>GTP</name>
        <dbReference type="ChEBI" id="CHEBI:37565"/>
        <label>1</label>
    </ligand>
</feature>
<feature type="binding site" evidence="1">
    <location>
        <begin position="120"/>
        <end position="123"/>
    </location>
    <ligand>
        <name>GTP</name>
        <dbReference type="ChEBI" id="CHEBI:37565"/>
        <label>1</label>
    </ligand>
</feature>
<feature type="binding site" evidence="1">
    <location>
        <begin position="184"/>
        <end position="191"/>
    </location>
    <ligand>
        <name>GTP</name>
        <dbReference type="ChEBI" id="CHEBI:37565"/>
        <label>2</label>
    </ligand>
</feature>
<feature type="binding site" evidence="1">
    <location>
        <begin position="231"/>
        <end position="235"/>
    </location>
    <ligand>
        <name>GTP</name>
        <dbReference type="ChEBI" id="CHEBI:37565"/>
        <label>2</label>
    </ligand>
</feature>
<feature type="binding site" evidence="1">
    <location>
        <begin position="296"/>
        <end position="299"/>
    </location>
    <ligand>
        <name>GTP</name>
        <dbReference type="ChEBI" id="CHEBI:37565"/>
        <label>2</label>
    </ligand>
</feature>
<reference key="1">
    <citation type="journal article" date="2007" name="PLoS Genet.">
        <title>Patterns and implications of gene gain and loss in the evolution of Prochlorococcus.</title>
        <authorList>
            <person name="Kettler G.C."/>
            <person name="Martiny A.C."/>
            <person name="Huang K."/>
            <person name="Zucker J."/>
            <person name="Coleman M.L."/>
            <person name="Rodrigue S."/>
            <person name="Chen F."/>
            <person name="Lapidus A."/>
            <person name="Ferriera S."/>
            <person name="Johnson J."/>
            <person name="Steglich C."/>
            <person name="Church G.M."/>
            <person name="Richardson P."/>
            <person name="Chisholm S.W."/>
        </authorList>
    </citation>
    <scope>NUCLEOTIDE SEQUENCE [LARGE SCALE GENOMIC DNA]</scope>
    <source>
        <strain>MIT 9515</strain>
    </source>
</reference>
<keyword id="KW-0342">GTP-binding</keyword>
<keyword id="KW-0547">Nucleotide-binding</keyword>
<keyword id="KW-0677">Repeat</keyword>
<keyword id="KW-0690">Ribosome biogenesis</keyword>
<sequence length="458" mass="51294">MTLPSIAIIGRPNVGKSTLVNRLCQSNDAIVFDKPGVTRDRTYQNASWGGKEFQVVDTGGLVFEDDSEFLPEIRTQVFLALEEASIALFVVDGNQGVTTGDLSIAKWLRNSDCKTIVAVNKCESLSLGISMASEFWKLGLGEPYPVSAIHGSGTGDLLDLVIDELPKDFDVEDKEDKVMMSIIGRPNVGKSSLLNAICGEKRAIVSDISGTTTDSIDTLIKKNSHLWKIVDTAGIRRKKNVKYGTEFFGINRAFKSIDRSDVCVLVIDAIDGVTDQDQKLAGRIEEQGRACVIVVNKWDLVEKNNSTIYQVEKELRSKLYFLHWSKMIFISALTGQRVENIFEHALNAVTQHRMRVTTSVVNEVLKEALGWKSPPTKRSGKQGRLYYGTQVKNQPPTFTLFVNDPKLFGITYRRYIEKQIRLNLGFEGSPIILLWRGKQKRDLEKETSKKNINIIQKD</sequence>
<dbReference type="EMBL" id="CP000552">
    <property type="protein sequence ID" value="ABM71662.1"/>
    <property type="molecule type" value="Genomic_DNA"/>
</dbReference>
<dbReference type="RefSeq" id="WP_011819770.1">
    <property type="nucleotide sequence ID" value="NC_008817.1"/>
</dbReference>
<dbReference type="SMR" id="A2BV51"/>
<dbReference type="STRING" id="167542.P9515_04531"/>
<dbReference type="GeneID" id="60200441"/>
<dbReference type="KEGG" id="pmc:P9515_04531"/>
<dbReference type="eggNOG" id="COG1160">
    <property type="taxonomic scope" value="Bacteria"/>
</dbReference>
<dbReference type="HOGENOM" id="CLU_016077_6_2_3"/>
<dbReference type="OrthoDB" id="9805918at2"/>
<dbReference type="Proteomes" id="UP000001589">
    <property type="component" value="Chromosome"/>
</dbReference>
<dbReference type="GO" id="GO:0005525">
    <property type="term" value="F:GTP binding"/>
    <property type="evidence" value="ECO:0007669"/>
    <property type="project" value="UniProtKB-UniRule"/>
</dbReference>
<dbReference type="GO" id="GO:0043022">
    <property type="term" value="F:ribosome binding"/>
    <property type="evidence" value="ECO:0007669"/>
    <property type="project" value="TreeGrafter"/>
</dbReference>
<dbReference type="GO" id="GO:0042254">
    <property type="term" value="P:ribosome biogenesis"/>
    <property type="evidence" value="ECO:0007669"/>
    <property type="project" value="UniProtKB-KW"/>
</dbReference>
<dbReference type="CDD" id="cd01894">
    <property type="entry name" value="EngA1"/>
    <property type="match status" value="1"/>
</dbReference>
<dbReference type="CDD" id="cd01895">
    <property type="entry name" value="EngA2"/>
    <property type="match status" value="1"/>
</dbReference>
<dbReference type="FunFam" id="3.30.300.20:FF:000004">
    <property type="entry name" value="GTPase Der"/>
    <property type="match status" value="1"/>
</dbReference>
<dbReference type="FunFam" id="3.40.50.300:FF:000040">
    <property type="entry name" value="GTPase Der"/>
    <property type="match status" value="1"/>
</dbReference>
<dbReference type="FunFam" id="3.40.50.300:FF:000057">
    <property type="entry name" value="GTPase Der"/>
    <property type="match status" value="1"/>
</dbReference>
<dbReference type="Gene3D" id="3.30.300.20">
    <property type="match status" value="1"/>
</dbReference>
<dbReference type="Gene3D" id="3.40.50.300">
    <property type="entry name" value="P-loop containing nucleotide triphosphate hydrolases"/>
    <property type="match status" value="2"/>
</dbReference>
<dbReference type="HAMAP" id="MF_00195">
    <property type="entry name" value="GTPase_Der"/>
    <property type="match status" value="1"/>
</dbReference>
<dbReference type="InterPro" id="IPR031166">
    <property type="entry name" value="G_ENGA"/>
</dbReference>
<dbReference type="InterPro" id="IPR006073">
    <property type="entry name" value="GTP-bd"/>
</dbReference>
<dbReference type="InterPro" id="IPR016484">
    <property type="entry name" value="GTPase_Der"/>
</dbReference>
<dbReference type="InterPro" id="IPR032859">
    <property type="entry name" value="KH_dom-like"/>
</dbReference>
<dbReference type="InterPro" id="IPR015946">
    <property type="entry name" value="KH_dom-like_a/b"/>
</dbReference>
<dbReference type="InterPro" id="IPR027417">
    <property type="entry name" value="P-loop_NTPase"/>
</dbReference>
<dbReference type="InterPro" id="IPR005225">
    <property type="entry name" value="Small_GTP-bd"/>
</dbReference>
<dbReference type="NCBIfam" id="TIGR03594">
    <property type="entry name" value="GTPase_EngA"/>
    <property type="match status" value="1"/>
</dbReference>
<dbReference type="NCBIfam" id="TIGR00231">
    <property type="entry name" value="small_GTP"/>
    <property type="match status" value="2"/>
</dbReference>
<dbReference type="PANTHER" id="PTHR43834">
    <property type="entry name" value="GTPASE DER"/>
    <property type="match status" value="1"/>
</dbReference>
<dbReference type="PANTHER" id="PTHR43834:SF6">
    <property type="entry name" value="GTPASE DER"/>
    <property type="match status" value="1"/>
</dbReference>
<dbReference type="Pfam" id="PF14714">
    <property type="entry name" value="KH_dom-like"/>
    <property type="match status" value="1"/>
</dbReference>
<dbReference type="Pfam" id="PF01926">
    <property type="entry name" value="MMR_HSR1"/>
    <property type="match status" value="2"/>
</dbReference>
<dbReference type="PIRSF" id="PIRSF006485">
    <property type="entry name" value="GTP-binding_EngA"/>
    <property type="match status" value="1"/>
</dbReference>
<dbReference type="PRINTS" id="PR00326">
    <property type="entry name" value="GTP1OBG"/>
</dbReference>
<dbReference type="SUPFAM" id="SSF52540">
    <property type="entry name" value="P-loop containing nucleoside triphosphate hydrolases"/>
    <property type="match status" value="2"/>
</dbReference>
<dbReference type="PROSITE" id="PS51712">
    <property type="entry name" value="G_ENGA"/>
    <property type="match status" value="2"/>
</dbReference>
<comment type="function">
    <text evidence="1">GTPase that plays an essential role in the late steps of ribosome biogenesis.</text>
</comment>
<comment type="subunit">
    <text evidence="1">Associates with the 50S ribosomal subunit.</text>
</comment>
<comment type="similarity">
    <text evidence="1">Belongs to the TRAFAC class TrmE-Era-EngA-EngB-Septin-like GTPase superfamily. EngA (Der) GTPase family.</text>
</comment>
<organism>
    <name type="scientific">Prochlorococcus marinus (strain MIT 9515)</name>
    <dbReference type="NCBI Taxonomy" id="167542"/>
    <lineage>
        <taxon>Bacteria</taxon>
        <taxon>Bacillati</taxon>
        <taxon>Cyanobacteriota</taxon>
        <taxon>Cyanophyceae</taxon>
        <taxon>Synechococcales</taxon>
        <taxon>Prochlorococcaceae</taxon>
        <taxon>Prochlorococcus</taxon>
    </lineage>
</organism>
<gene>
    <name evidence="1" type="primary">der</name>
    <name type="synonym">engA</name>
    <name type="ordered locus">P9515_04531</name>
</gene>
<evidence type="ECO:0000255" key="1">
    <source>
        <dbReference type="HAMAP-Rule" id="MF_00195"/>
    </source>
</evidence>